<organism>
    <name type="scientific">Pseudomonas entomophila (strain L48)</name>
    <dbReference type="NCBI Taxonomy" id="384676"/>
    <lineage>
        <taxon>Bacteria</taxon>
        <taxon>Pseudomonadati</taxon>
        <taxon>Pseudomonadota</taxon>
        <taxon>Gammaproteobacteria</taxon>
        <taxon>Pseudomonadales</taxon>
        <taxon>Pseudomonadaceae</taxon>
        <taxon>Pseudomonas</taxon>
    </lineage>
</organism>
<name>RS18_PSEE4</name>
<comment type="function">
    <text evidence="1">Binds as a heterodimer with protein bS6 to the central domain of the 16S rRNA, where it helps stabilize the platform of the 30S subunit.</text>
</comment>
<comment type="subunit">
    <text evidence="1">Part of the 30S ribosomal subunit. Forms a tight heterodimer with protein bS6.</text>
</comment>
<comment type="similarity">
    <text evidence="1">Belongs to the bacterial ribosomal protein bS18 family.</text>
</comment>
<accession>Q1I462</accession>
<evidence type="ECO:0000255" key="1">
    <source>
        <dbReference type="HAMAP-Rule" id="MF_00270"/>
    </source>
</evidence>
<evidence type="ECO:0000305" key="2"/>
<sequence>MARFFRRRKFCRFTAEDVKEIDFKDLNTLKAYVSETGKIVPSRITGTKARYQRQLATAIKRARFLALLPYTDSHGR</sequence>
<reference key="1">
    <citation type="journal article" date="2006" name="Nat. Biotechnol.">
        <title>Complete genome sequence of the entomopathogenic and metabolically versatile soil bacterium Pseudomonas entomophila.</title>
        <authorList>
            <person name="Vodovar N."/>
            <person name="Vallenet D."/>
            <person name="Cruveiller S."/>
            <person name="Rouy Z."/>
            <person name="Barbe V."/>
            <person name="Acosta C."/>
            <person name="Cattolico L."/>
            <person name="Jubin C."/>
            <person name="Lajus A."/>
            <person name="Segurens B."/>
            <person name="Vacherie B."/>
            <person name="Wincker P."/>
            <person name="Weissenbach J."/>
            <person name="Lemaitre B."/>
            <person name="Medigue C."/>
            <person name="Boccard F."/>
        </authorList>
    </citation>
    <scope>NUCLEOTIDE SEQUENCE [LARGE SCALE GENOMIC DNA]</scope>
    <source>
        <strain>L48</strain>
    </source>
</reference>
<feature type="chain" id="PRO_1000003568" description="Small ribosomal subunit protein bS18">
    <location>
        <begin position="1"/>
        <end position="76"/>
    </location>
</feature>
<keyword id="KW-0687">Ribonucleoprotein</keyword>
<keyword id="KW-0689">Ribosomal protein</keyword>
<keyword id="KW-0694">RNA-binding</keyword>
<keyword id="KW-0699">rRNA-binding</keyword>
<dbReference type="EMBL" id="CT573326">
    <property type="protein sequence ID" value="CAK17574.1"/>
    <property type="molecule type" value="Genomic_DNA"/>
</dbReference>
<dbReference type="RefSeq" id="WP_003249563.1">
    <property type="nucleotide sequence ID" value="NC_008027.1"/>
</dbReference>
<dbReference type="SMR" id="Q1I462"/>
<dbReference type="STRING" id="384676.PSEEN4929"/>
<dbReference type="GeneID" id="97170237"/>
<dbReference type="KEGG" id="pen:PSEEN4929"/>
<dbReference type="eggNOG" id="COG0238">
    <property type="taxonomic scope" value="Bacteria"/>
</dbReference>
<dbReference type="HOGENOM" id="CLU_148710_2_3_6"/>
<dbReference type="OrthoDB" id="9812008at2"/>
<dbReference type="Proteomes" id="UP000000658">
    <property type="component" value="Chromosome"/>
</dbReference>
<dbReference type="GO" id="GO:0022627">
    <property type="term" value="C:cytosolic small ribosomal subunit"/>
    <property type="evidence" value="ECO:0007669"/>
    <property type="project" value="TreeGrafter"/>
</dbReference>
<dbReference type="GO" id="GO:0070181">
    <property type="term" value="F:small ribosomal subunit rRNA binding"/>
    <property type="evidence" value="ECO:0007669"/>
    <property type="project" value="TreeGrafter"/>
</dbReference>
<dbReference type="GO" id="GO:0003735">
    <property type="term" value="F:structural constituent of ribosome"/>
    <property type="evidence" value="ECO:0007669"/>
    <property type="project" value="InterPro"/>
</dbReference>
<dbReference type="GO" id="GO:0006412">
    <property type="term" value="P:translation"/>
    <property type="evidence" value="ECO:0007669"/>
    <property type="project" value="UniProtKB-UniRule"/>
</dbReference>
<dbReference type="FunFam" id="4.10.640.10:FF:000001">
    <property type="entry name" value="30S ribosomal protein S18"/>
    <property type="match status" value="1"/>
</dbReference>
<dbReference type="Gene3D" id="4.10.640.10">
    <property type="entry name" value="Ribosomal protein S18"/>
    <property type="match status" value="1"/>
</dbReference>
<dbReference type="HAMAP" id="MF_00270">
    <property type="entry name" value="Ribosomal_bS18"/>
    <property type="match status" value="1"/>
</dbReference>
<dbReference type="InterPro" id="IPR001648">
    <property type="entry name" value="Ribosomal_bS18"/>
</dbReference>
<dbReference type="InterPro" id="IPR018275">
    <property type="entry name" value="Ribosomal_bS18_CS"/>
</dbReference>
<dbReference type="InterPro" id="IPR036870">
    <property type="entry name" value="Ribosomal_bS18_sf"/>
</dbReference>
<dbReference type="NCBIfam" id="TIGR00165">
    <property type="entry name" value="S18"/>
    <property type="match status" value="1"/>
</dbReference>
<dbReference type="PANTHER" id="PTHR13479">
    <property type="entry name" value="30S RIBOSOMAL PROTEIN S18"/>
    <property type="match status" value="1"/>
</dbReference>
<dbReference type="PANTHER" id="PTHR13479:SF40">
    <property type="entry name" value="SMALL RIBOSOMAL SUBUNIT PROTEIN BS18M"/>
    <property type="match status" value="1"/>
</dbReference>
<dbReference type="Pfam" id="PF01084">
    <property type="entry name" value="Ribosomal_S18"/>
    <property type="match status" value="1"/>
</dbReference>
<dbReference type="PRINTS" id="PR00974">
    <property type="entry name" value="RIBOSOMALS18"/>
</dbReference>
<dbReference type="SUPFAM" id="SSF46911">
    <property type="entry name" value="Ribosomal protein S18"/>
    <property type="match status" value="1"/>
</dbReference>
<dbReference type="PROSITE" id="PS00057">
    <property type="entry name" value="RIBOSOMAL_S18"/>
    <property type="match status" value="1"/>
</dbReference>
<proteinExistence type="inferred from homology"/>
<protein>
    <recommendedName>
        <fullName evidence="1">Small ribosomal subunit protein bS18</fullName>
    </recommendedName>
    <alternativeName>
        <fullName evidence="2">30S ribosomal protein S18</fullName>
    </alternativeName>
</protein>
<gene>
    <name evidence="1" type="primary">rpsR</name>
    <name type="ordered locus">PSEEN4929</name>
</gene>